<proteinExistence type="evidence at protein level"/>
<dbReference type="EMBL" id="AB449910">
    <property type="protein sequence ID" value="BAH16653.1"/>
    <property type="molecule type" value="mRNA"/>
</dbReference>
<dbReference type="EMBL" id="AK001750">
    <property type="protein sequence ID" value="BAA91881.1"/>
    <property type="status" value="ALT_INIT"/>
    <property type="molecule type" value="mRNA"/>
</dbReference>
<dbReference type="EMBL" id="AK001908">
    <property type="protein sequence ID" value="BAA91973.1"/>
    <property type="molecule type" value="mRNA"/>
</dbReference>
<dbReference type="EMBL" id="AC078783">
    <property type="status" value="NOT_ANNOTATED_CDS"/>
    <property type="molecule type" value="Genomic_DNA"/>
</dbReference>
<dbReference type="EMBL" id="AC093003">
    <property type="status" value="NOT_ANNOTATED_CDS"/>
    <property type="molecule type" value="Genomic_DNA"/>
</dbReference>
<dbReference type="EMBL" id="BC010221">
    <property type="protein sequence ID" value="AAH10221.1"/>
    <property type="status" value="ALT_INIT"/>
    <property type="molecule type" value="mRNA"/>
</dbReference>
<dbReference type="EMBL" id="BC020955">
    <property type="protein sequence ID" value="AAH20955.1"/>
    <property type="status" value="ALT_INIT"/>
    <property type="molecule type" value="mRNA"/>
</dbReference>
<dbReference type="EMBL" id="AL713684">
    <property type="protein sequence ID" value="CAD28488.1"/>
    <property type="molecule type" value="mRNA"/>
</dbReference>
<dbReference type="EMBL" id="AY740521">
    <property type="protein sequence ID" value="AAW66944.1"/>
    <property type="molecule type" value="mRNA"/>
</dbReference>
<dbReference type="CCDS" id="CCDS2936.1">
    <molecule id="Q9NUY8-2"/>
</dbReference>
<dbReference type="CCDS" id="CCDS56265.1">
    <molecule id="Q9NUY8-1"/>
</dbReference>
<dbReference type="RefSeq" id="NP_001186127.1">
    <molecule id="Q9NUY8-1"/>
    <property type="nucleotide sequence ID" value="NM_001199198.3"/>
</dbReference>
<dbReference type="RefSeq" id="NP_060779.2">
    <molecule id="Q9NUY8-2"/>
    <property type="nucleotide sequence ID" value="NM_018309.5"/>
</dbReference>
<dbReference type="PDB" id="6JL7">
    <property type="method" value="X-ray"/>
    <property type="resolution" value="2.50 A"/>
    <property type="chains" value="A=17-460"/>
</dbReference>
<dbReference type="PDB" id="6JM5">
    <property type="method" value="X-ray"/>
    <property type="resolution" value="1.60 A"/>
    <property type="chains" value="A/B=577-699"/>
</dbReference>
<dbReference type="PDB" id="8JJ9">
    <property type="method" value="X-ray"/>
    <property type="resolution" value="2.51 A"/>
    <property type="chains" value="C/D=533-553"/>
</dbReference>
<dbReference type="PDB" id="8QQF">
    <property type="method" value="X-ray"/>
    <property type="resolution" value="2.19 A"/>
    <property type="chains" value="A/C=574-692"/>
</dbReference>
<dbReference type="PDBsum" id="6JL7"/>
<dbReference type="PDBsum" id="6JM5"/>
<dbReference type="PDBsum" id="8JJ9"/>
<dbReference type="PDBsum" id="8QQF"/>
<dbReference type="SMR" id="Q9NUY8"/>
<dbReference type="BioGRID" id="120889">
    <property type="interactions" value="58"/>
</dbReference>
<dbReference type="FunCoup" id="Q9NUY8">
    <property type="interactions" value="3754"/>
</dbReference>
<dbReference type="IntAct" id="Q9NUY8">
    <property type="interactions" value="37"/>
</dbReference>
<dbReference type="MINT" id="Q9NUY8"/>
<dbReference type="STRING" id="9606.ENSP00000377700"/>
<dbReference type="GlyGen" id="Q9NUY8">
    <property type="glycosylation" value="1 site, 1 O-linked glycan (1 site)"/>
</dbReference>
<dbReference type="iPTMnet" id="Q9NUY8"/>
<dbReference type="PhosphoSitePlus" id="Q9NUY8"/>
<dbReference type="SwissPalm" id="Q9NUY8"/>
<dbReference type="BioMuta" id="TBC1D23"/>
<dbReference type="DMDM" id="300669675"/>
<dbReference type="jPOST" id="Q9NUY8"/>
<dbReference type="MassIVE" id="Q9NUY8"/>
<dbReference type="PaxDb" id="9606-ENSP00000377700"/>
<dbReference type="PeptideAtlas" id="Q9NUY8"/>
<dbReference type="ProteomicsDB" id="82728">
    <molecule id="Q9NUY8-1"/>
</dbReference>
<dbReference type="ProteomicsDB" id="82729">
    <molecule id="Q9NUY8-2"/>
</dbReference>
<dbReference type="Pumba" id="Q9NUY8"/>
<dbReference type="Antibodypedia" id="46507">
    <property type="antibodies" value="68 antibodies from 22 providers"/>
</dbReference>
<dbReference type="DNASU" id="55773"/>
<dbReference type="Ensembl" id="ENST00000344949.9">
    <molecule id="Q9NUY8-2"/>
    <property type="protein sequence ID" value="ENSP00000340693.5"/>
    <property type="gene ID" value="ENSG00000036054.13"/>
</dbReference>
<dbReference type="Ensembl" id="ENST00000394144.9">
    <molecule id="Q9NUY8-1"/>
    <property type="protein sequence ID" value="ENSP00000377700.4"/>
    <property type="gene ID" value="ENSG00000036054.13"/>
</dbReference>
<dbReference type="GeneID" id="55773"/>
<dbReference type="KEGG" id="hsa:55773"/>
<dbReference type="MANE-Select" id="ENST00000394144.9">
    <property type="protein sequence ID" value="ENSP00000377700.4"/>
    <property type="RefSeq nucleotide sequence ID" value="NM_001199198.3"/>
    <property type="RefSeq protein sequence ID" value="NP_001186127.1"/>
</dbReference>
<dbReference type="UCSC" id="uc003dts.5">
    <molecule id="Q9NUY8-1"/>
    <property type="organism name" value="human"/>
</dbReference>
<dbReference type="AGR" id="HGNC:25622"/>
<dbReference type="CTD" id="55773"/>
<dbReference type="DisGeNET" id="55773"/>
<dbReference type="GeneCards" id="TBC1D23"/>
<dbReference type="HGNC" id="HGNC:25622">
    <property type="gene designation" value="TBC1D23"/>
</dbReference>
<dbReference type="HPA" id="ENSG00000036054">
    <property type="expression patterns" value="Low tissue specificity"/>
</dbReference>
<dbReference type="MalaCards" id="TBC1D23"/>
<dbReference type="MIM" id="617687">
    <property type="type" value="gene"/>
</dbReference>
<dbReference type="MIM" id="617695">
    <property type="type" value="phenotype"/>
</dbReference>
<dbReference type="neXtProt" id="NX_Q9NUY8"/>
<dbReference type="OpenTargets" id="ENSG00000036054"/>
<dbReference type="PharmGKB" id="PA142670829"/>
<dbReference type="VEuPathDB" id="HostDB:ENSG00000036054"/>
<dbReference type="eggNOG" id="KOG3636">
    <property type="taxonomic scope" value="Eukaryota"/>
</dbReference>
<dbReference type="GeneTree" id="ENSGT00390000000191"/>
<dbReference type="HOGENOM" id="CLU_026555_0_0_1"/>
<dbReference type="InParanoid" id="Q9NUY8"/>
<dbReference type="OMA" id="CTMWDLY"/>
<dbReference type="OrthoDB" id="73307at2759"/>
<dbReference type="PAN-GO" id="Q9NUY8">
    <property type="GO annotations" value="4 GO annotations based on evolutionary models"/>
</dbReference>
<dbReference type="PhylomeDB" id="Q9NUY8"/>
<dbReference type="TreeFam" id="TF105892"/>
<dbReference type="PathwayCommons" id="Q9NUY8"/>
<dbReference type="SignaLink" id="Q9NUY8"/>
<dbReference type="BioGRID-ORCS" id="55773">
    <property type="hits" value="18 hits in 1156 CRISPR screens"/>
</dbReference>
<dbReference type="ChiTaRS" id="TBC1D23">
    <property type="organism name" value="human"/>
</dbReference>
<dbReference type="GenomeRNAi" id="55773"/>
<dbReference type="Pharos" id="Q9NUY8">
    <property type="development level" value="Tbio"/>
</dbReference>
<dbReference type="PRO" id="PR:Q9NUY8"/>
<dbReference type="Proteomes" id="UP000005640">
    <property type="component" value="Chromosome 3"/>
</dbReference>
<dbReference type="RNAct" id="Q9NUY8">
    <property type="molecule type" value="protein"/>
</dbReference>
<dbReference type="Bgee" id="ENSG00000036054">
    <property type="expression patterns" value="Expressed in cardiac muscle of right atrium and 190 other cell types or tissues"/>
</dbReference>
<dbReference type="ExpressionAtlas" id="Q9NUY8">
    <property type="expression patterns" value="baseline and differential"/>
</dbReference>
<dbReference type="GO" id="GO:0031410">
    <property type="term" value="C:cytoplasmic vesicle"/>
    <property type="evidence" value="ECO:0000314"/>
    <property type="project" value="UniProtKB"/>
</dbReference>
<dbReference type="GO" id="GO:0005829">
    <property type="term" value="C:cytosol"/>
    <property type="evidence" value="ECO:0007669"/>
    <property type="project" value="GOC"/>
</dbReference>
<dbReference type="GO" id="GO:0005794">
    <property type="term" value="C:Golgi apparatus"/>
    <property type="evidence" value="ECO:0000314"/>
    <property type="project" value="HPA"/>
</dbReference>
<dbReference type="GO" id="GO:0005802">
    <property type="term" value="C:trans-Golgi network"/>
    <property type="evidence" value="ECO:0000314"/>
    <property type="project" value="UniProtKB"/>
</dbReference>
<dbReference type="GO" id="GO:0007420">
    <property type="term" value="P:brain development"/>
    <property type="evidence" value="ECO:0000315"/>
    <property type="project" value="UniProtKB"/>
</dbReference>
<dbReference type="GO" id="GO:1990403">
    <property type="term" value="P:embryonic brain development"/>
    <property type="evidence" value="ECO:0000250"/>
    <property type="project" value="UniProtKB"/>
</dbReference>
<dbReference type="GO" id="GO:0031175">
    <property type="term" value="P:neuron projection development"/>
    <property type="evidence" value="ECO:0000250"/>
    <property type="project" value="UniProtKB"/>
</dbReference>
<dbReference type="GO" id="GO:0042147">
    <property type="term" value="P:retrograde transport, endosome to Golgi"/>
    <property type="evidence" value="ECO:0000315"/>
    <property type="project" value="UniProtKB"/>
</dbReference>
<dbReference type="GO" id="GO:0099041">
    <property type="term" value="P:vesicle tethering to Golgi"/>
    <property type="evidence" value="ECO:0000314"/>
    <property type="project" value="UniProtKB"/>
</dbReference>
<dbReference type="GO" id="GO:0016192">
    <property type="term" value="P:vesicle-mediated transport"/>
    <property type="evidence" value="ECO:0000250"/>
    <property type="project" value="UniProtKB"/>
</dbReference>
<dbReference type="CDD" id="cd20788">
    <property type="entry name" value="TBC1D23_C-like"/>
    <property type="match status" value="1"/>
</dbReference>
<dbReference type="FunFam" id="1.10.472.80:FF:000017">
    <property type="entry name" value="TBC1 domain family member 23"/>
    <property type="match status" value="1"/>
</dbReference>
<dbReference type="FunFam" id="3.40.250.10:FF:000002">
    <property type="entry name" value="TBC1 domain family member 23"/>
    <property type="match status" value="1"/>
</dbReference>
<dbReference type="Gene3D" id="3.40.250.10">
    <property type="entry name" value="Rhodanese-like domain"/>
    <property type="match status" value="1"/>
</dbReference>
<dbReference type="Gene3D" id="1.10.472.80">
    <property type="entry name" value="Ypt/Rab-GAP domain of gyp1p, domain 3"/>
    <property type="match status" value="1"/>
</dbReference>
<dbReference type="InterPro" id="IPR000195">
    <property type="entry name" value="Rab-GAP-TBC_dom"/>
</dbReference>
<dbReference type="InterPro" id="IPR035969">
    <property type="entry name" value="Rab-GAP_TBC_sf"/>
</dbReference>
<dbReference type="InterPro" id="IPR001763">
    <property type="entry name" value="Rhodanese-like_dom"/>
</dbReference>
<dbReference type="InterPro" id="IPR036873">
    <property type="entry name" value="Rhodanese-like_dom_sf"/>
</dbReference>
<dbReference type="InterPro" id="IPR039755">
    <property type="entry name" value="TBC1D23"/>
</dbReference>
<dbReference type="InterPro" id="IPR045799">
    <property type="entry name" value="TBC1D23_C"/>
</dbReference>
<dbReference type="PANTHER" id="PTHR13297:SF5">
    <property type="entry name" value="TBC1 DOMAIN FAMILY MEMBER 23"/>
    <property type="match status" value="1"/>
</dbReference>
<dbReference type="PANTHER" id="PTHR13297">
    <property type="entry name" value="TBC1 DOMAIN FAMILY MEMBER 23-RELATED"/>
    <property type="match status" value="1"/>
</dbReference>
<dbReference type="Pfam" id="PF00566">
    <property type="entry name" value="RabGAP-TBC"/>
    <property type="match status" value="1"/>
</dbReference>
<dbReference type="Pfam" id="PF00581">
    <property type="entry name" value="Rhodanese"/>
    <property type="match status" value="1"/>
</dbReference>
<dbReference type="Pfam" id="PF19430">
    <property type="entry name" value="TBC1D23_C"/>
    <property type="match status" value="1"/>
</dbReference>
<dbReference type="SMART" id="SM00164">
    <property type="entry name" value="TBC"/>
    <property type="match status" value="1"/>
</dbReference>
<dbReference type="SUPFAM" id="SSF52821">
    <property type="entry name" value="Rhodanese/Cell cycle control phosphatase"/>
    <property type="match status" value="1"/>
</dbReference>
<dbReference type="SUPFAM" id="SSF47923">
    <property type="entry name" value="Ypt/Rab-GAP domain of gyp1p"/>
    <property type="match status" value="2"/>
</dbReference>
<dbReference type="PROSITE" id="PS50206">
    <property type="entry name" value="RHODANESE_3"/>
    <property type="match status" value="1"/>
</dbReference>
<dbReference type="PROSITE" id="PS50086">
    <property type="entry name" value="TBC_RABGAP"/>
    <property type="match status" value="1"/>
</dbReference>
<comment type="function">
    <text evidence="1 6 7 8">Putative Rab GTPase-activating protein which plays a role in vesicular trafficking (PubMed:28823707). Involved in endosome-to-Golgi trafficking. Acts as a bridging protein by binding simultaneously to golgins, including GOLGA1 and GOLGA4, located at the trans-Golgi, and to the WASH complex, located on endosome-derived vesicles (PubMed:29084197, PubMed:29426865). Together with WDR11 complex facilitates the golgin-mediated capture of vesicles generated using AP-1 (PubMed:29426865). Plays a role in brain development, including in cortical neuron positioning (By similarity). May also be important for neurite outgrowth, possibly through its involvement in membrane trafficking and cargo delivery, 2 processes that are essential for axonal and dendritic growth (By similarity). May act as a general inhibitor of innate immunity signaling, strongly inhibiting multiple TLR and dectin/CLEC7A-signaling pathways. Does not alter initial activation events, but instead affects maintenance of inflammatory gene expression several hours after bacterial lipopolysaccharide (LPS) challenge (By similarity).</text>
</comment>
<comment type="subunit">
    <text evidence="7 8">Directly interacts with GOLGA1 and GOLGA4 (PubMed:29084197). Interacts with FAM91A1, C17ORF75 and WDR11; the interaction recruits TBC1D23 to AP-1-derived vesicles (PubMed:29084197, PubMed:29426865). Directly interacts with WASHC1 and WASHC2A/FAM21A (PubMed:29084197). Interacts with FKBP15 (PubMed:29084197).</text>
</comment>
<comment type="interaction">
    <interactant intactId="EBI-2853126">
        <id>Q9NUY8</id>
    </interactant>
    <interactant intactId="EBI-745689">
        <id>Q7L5A3</id>
        <label>ATOSB</label>
    </interactant>
    <organismsDiffer>false</organismsDiffer>
    <experiments>3</experiments>
</comment>
<comment type="interaction">
    <interactant intactId="EBI-2853126">
        <id>Q9NUY8</id>
    </interactant>
    <interactant intactId="EBI-10196469">
        <id>Q8TC20</id>
        <label>CAGE1</label>
    </interactant>
    <organismsDiffer>false</organismsDiffer>
    <experiments>3</experiments>
</comment>
<comment type="interaction">
    <interactant intactId="EBI-2853126">
        <id>Q9NUY8</id>
    </interactant>
    <interactant intactId="EBI-10171774">
        <id>P60410</id>
        <label>KRTAP10-8</label>
    </interactant>
    <organismsDiffer>false</organismsDiffer>
    <experiments>3</experiments>
</comment>
<comment type="interaction">
    <interactant intactId="EBI-2853126">
        <id>Q9NUY8</id>
    </interactant>
    <interactant intactId="EBI-10172052">
        <id>P60411</id>
        <label>KRTAP10-9</label>
    </interactant>
    <organismsDiffer>false</organismsDiffer>
    <experiments>3</experiments>
</comment>
<comment type="interaction">
    <interactant intactId="EBI-2853126">
        <id>Q9NUY8</id>
    </interactant>
    <interactant intactId="EBI-739863">
        <id>Q9BQ66</id>
        <label>KRTAP4-12</label>
    </interactant>
    <organismsDiffer>false</organismsDiffer>
    <experiments>3</experiments>
</comment>
<comment type="interaction">
    <interactant intactId="EBI-2853126">
        <id>Q9NUY8</id>
    </interactant>
    <interactant intactId="EBI-2902395">
        <id>Q9BWW4</id>
        <label>SSBP3</label>
    </interactant>
    <organismsDiffer>false</organismsDiffer>
    <experiments>3</experiments>
</comment>
<comment type="interaction">
    <interactant intactId="EBI-2853126">
        <id>Q9NUY8</id>
    </interactant>
    <interactant intactId="EBI-714790">
        <id>O43379</id>
        <label>WDR62</label>
    </interactant>
    <organismsDiffer>false</organismsDiffer>
    <experiments>3</experiments>
</comment>
<comment type="interaction">
    <interactant intactId="EBI-10314276">
        <id>Q9NUY8-2</id>
    </interactant>
    <interactant intactId="EBI-10196469">
        <id>Q8TC20</id>
        <label>CAGE1</label>
    </interactant>
    <organismsDiffer>false</organismsDiffer>
    <experiments>3</experiments>
</comment>
<comment type="interaction">
    <interactant intactId="EBI-10314276">
        <id>Q9NUY8-2</id>
    </interactant>
    <interactant intactId="EBI-10172052">
        <id>P60411</id>
        <label>KRTAP10-9</label>
    </interactant>
    <organismsDiffer>false</organismsDiffer>
    <experiments>3</experiments>
</comment>
<comment type="interaction">
    <interactant intactId="EBI-10314276">
        <id>Q9NUY8-2</id>
    </interactant>
    <interactant intactId="EBI-5235340">
        <id>Q7Z699</id>
        <label>SPRED1</label>
    </interactant>
    <organismsDiffer>false</organismsDiffer>
    <experiments>3</experiments>
</comment>
<comment type="interaction">
    <interactant intactId="EBI-10314276">
        <id>Q9NUY8-2</id>
    </interactant>
    <interactant intactId="EBI-2902395">
        <id>Q9BWW4</id>
        <label>SSBP3</label>
    </interactant>
    <organismsDiffer>false</organismsDiffer>
    <experiments>3</experiments>
</comment>
<comment type="interaction">
    <interactant intactId="EBI-10314276">
        <id>Q9NUY8-2</id>
    </interactant>
    <interactant intactId="EBI-714790">
        <id>O43379</id>
        <label>WDR62</label>
    </interactant>
    <organismsDiffer>false</organismsDiffer>
    <experiments>3</experiments>
</comment>
<comment type="subcellular location">
    <subcellularLocation>
        <location evidence="5 7 8">Golgi apparatus</location>
        <location evidence="5 7 8">trans-Golgi network</location>
    </subcellularLocation>
    <subcellularLocation>
        <location evidence="8">Cytoplasmic vesicle</location>
    </subcellularLocation>
    <text evidence="5 7 8">Localization to the trans-Golgi is regulated by ARL1 and ARL5B/ARL8. ARL1 increases Golgi localization, while ARL5B decreases it. Recruitment to the trans-Golgi network requires the presence of GOLGA1 and GOLGA4, but not that of FAM91A1 (PubMed:28823706, PubMed:29084197). Recruited on AP-1-derived vesicles by WDR11 complex (PubMed:29426865).</text>
</comment>
<comment type="alternative products">
    <event type="alternative splicing"/>
    <isoform>
        <id>Q9NUY8-1</id>
        <name>1</name>
        <sequence type="displayed"/>
    </isoform>
    <isoform>
        <id>Q9NUY8-2</id>
        <name>2</name>
        <sequence type="described" ref="VSP_025519"/>
    </isoform>
</comment>
<comment type="tissue specificity">
    <text evidence="5">Isoform 1: Widely expressed, including in fetal adult brain (corpus callosum, pons, cerebellum), spinal cord, heart, skeletal muscle, thymus and bone marrow, and at lower levels in spleen. Hardly detected in liver, kidney, colon and testis. Isoform 2: Expressed at high levels in liver, kidney, colon and testis. Hardly detected in tissues expressing high levels of isoform 1. Expressed at low levels in spleen.</text>
</comment>
<comment type="disease" evidence="5 6">
    <disease id="DI-05084">
        <name>Pontocerebellar hypoplasia 11</name>
        <acronym>PCH11</acronym>
        <description>A non-degenerative form of pontocerebellar hypoplasia, a disorder characterized by structural defects of the pons and cerebellum, evident upon brain imaging. PCH11 features include severely delayed psychomotor development with intellectual disability and poor speech, microcephaly, dysmorphic features, and pontocerebellar hypoplasia. PCH11 inheritance is autosomal recessive.</description>
        <dbReference type="MIM" id="617695"/>
    </disease>
    <text>The disease is caused by variants affecting the gene represented in this entry.</text>
</comment>
<comment type="sequence caution" evidence="12">
    <conflict type="erroneous initiation">
        <sequence resource="EMBL-CDS" id="AAH10221"/>
    </conflict>
    <text>Truncated N-terminus.</text>
</comment>
<comment type="sequence caution" evidence="12">
    <conflict type="erroneous initiation">
        <sequence resource="EMBL-CDS" id="AAH20955"/>
    </conflict>
    <text>Truncated N-terminus.</text>
</comment>
<comment type="sequence caution" evidence="12">
    <conflict type="erroneous initiation">
        <sequence resource="EMBL-CDS" id="BAA91881"/>
    </conflict>
    <text>Truncated N-terminus.</text>
</comment>
<keyword id="KW-0002">3D-structure</keyword>
<keyword id="KW-0025">Alternative splicing</keyword>
<keyword id="KW-0968">Cytoplasmic vesicle</keyword>
<keyword id="KW-0217">Developmental protein</keyword>
<keyword id="KW-0225">Disease variant</keyword>
<keyword id="KW-0333">Golgi apparatus</keyword>
<keyword id="KW-0597">Phosphoprotein</keyword>
<keyword id="KW-1267">Proteomics identification</keyword>
<keyword id="KW-1185">Reference proteome</keyword>
<evidence type="ECO:0000250" key="1">
    <source>
        <dbReference type="UniProtKB" id="Q8K0F1"/>
    </source>
</evidence>
<evidence type="ECO:0000255" key="2">
    <source>
        <dbReference type="PROSITE-ProRule" id="PRU00163"/>
    </source>
</evidence>
<evidence type="ECO:0000255" key="3">
    <source>
        <dbReference type="PROSITE-ProRule" id="PRU00173"/>
    </source>
</evidence>
<evidence type="ECO:0000256" key="4">
    <source>
        <dbReference type="SAM" id="MobiDB-lite"/>
    </source>
</evidence>
<evidence type="ECO:0000269" key="5">
    <source>
    </source>
</evidence>
<evidence type="ECO:0000269" key="6">
    <source>
    </source>
</evidence>
<evidence type="ECO:0000269" key="7">
    <source>
    </source>
</evidence>
<evidence type="ECO:0000269" key="8">
    <source>
    </source>
</evidence>
<evidence type="ECO:0000303" key="9">
    <source>
    </source>
</evidence>
<evidence type="ECO:0000303" key="10">
    <source>
    </source>
</evidence>
<evidence type="ECO:0000303" key="11">
    <source>
    </source>
</evidence>
<evidence type="ECO:0000305" key="12"/>
<evidence type="ECO:0007744" key="13">
    <source>
    </source>
</evidence>
<evidence type="ECO:0007744" key="14">
    <source>
    </source>
</evidence>
<evidence type="ECO:0007744" key="15">
    <source>
    </source>
</evidence>
<evidence type="ECO:0007744" key="16">
    <source>
    </source>
</evidence>
<evidence type="ECO:0007829" key="17">
    <source>
        <dbReference type="PDB" id="6JL7"/>
    </source>
</evidence>
<evidence type="ECO:0007829" key="18">
    <source>
        <dbReference type="PDB" id="6JM5"/>
    </source>
</evidence>
<evidence type="ECO:0007829" key="19">
    <source>
        <dbReference type="PDB" id="8JJ9"/>
    </source>
</evidence>
<name>TBC23_HUMAN</name>
<protein>
    <recommendedName>
        <fullName>TBC1 domain family member 23</fullName>
    </recommendedName>
    <alternativeName>
        <fullName>HCV non-structural protein 4A-transactivated protein 1</fullName>
    </alternativeName>
</protein>
<feature type="chain" id="PRO_0000287497" description="TBC1 domain family member 23">
    <location>
        <begin position="1"/>
        <end position="699"/>
    </location>
</feature>
<feature type="domain" description="Rab-GAP TBC" evidence="2">
    <location>
        <begin position="44"/>
        <end position="225"/>
    </location>
</feature>
<feature type="domain" description="Rhodanese" evidence="3">
    <location>
        <begin position="334"/>
        <end position="446"/>
    </location>
</feature>
<feature type="region of interest" description="Disordered" evidence="4">
    <location>
        <begin position="459"/>
        <end position="483"/>
    </location>
</feature>
<feature type="region of interest" description="May mediate the interaction with WASHC1" evidence="1">
    <location>
        <begin position="514"/>
        <end position="699"/>
    </location>
</feature>
<feature type="region of interest" description="May mediate the interaction with C17orf75, FAM91A1 and WDR11" evidence="1">
    <location>
        <begin position="514"/>
        <end position="573"/>
    </location>
</feature>
<feature type="region of interest" description="May mediate the interaction with FKBP15 and WASHC2; required for endosome to Golgi trafficking" evidence="1">
    <location>
        <begin position="574"/>
        <end position="699"/>
    </location>
</feature>
<feature type="compositionally biased region" description="Polar residues" evidence="4">
    <location>
        <begin position="459"/>
        <end position="479"/>
    </location>
</feature>
<feature type="modified residue" description="Phosphoserine" evidence="15">
    <location>
        <position position="300"/>
    </location>
</feature>
<feature type="modified residue" description="Phosphoserine" evidence="1">
    <location>
        <position position="469"/>
    </location>
</feature>
<feature type="modified residue" description="Phosphoserine" evidence="13 15">
    <location>
        <position position="474"/>
    </location>
</feature>
<feature type="modified residue" description="Phosphoserine" evidence="14 15">
    <location>
        <position position="507"/>
    </location>
</feature>
<feature type="modified residue" description="Phosphothreonine" evidence="13 14">
    <location>
        <position position="514"/>
    </location>
</feature>
<feature type="modified residue" description="Phosphoserine" evidence="15">
    <location>
        <position position="520"/>
    </location>
</feature>
<feature type="modified residue" description="Phosphoserine" evidence="16">
    <location>
        <position position="571"/>
    </location>
</feature>
<feature type="splice variant" id="VSP_025519" description="In isoform 2." evidence="9 10 11">
    <location>
        <begin position="518"/>
        <end position="532"/>
    </location>
</feature>
<feature type="sequence variant" id="VAR_080040" description="In PCH11; uncertain significance." evidence="5">
    <original>R</original>
    <variation>Q</variation>
    <location>
        <position position="518"/>
    </location>
</feature>
<feature type="sequence conflict" description="In Ref. 1; BAH16653 and 2; BAA91973." evidence="12" ref="1 2">
    <original>S</original>
    <variation>C</variation>
    <location>
        <position position="66"/>
    </location>
</feature>
<feature type="sequence conflict" description="In Ref. 1; BAH16653 and 2; BAA91973." evidence="12" ref="1 2">
    <original>L</original>
    <variation>P</variation>
    <location>
        <position position="170"/>
    </location>
</feature>
<feature type="sequence conflict" description="In Ref. 2; BAA91973." evidence="12" ref="2">
    <original>L</original>
    <variation>S</variation>
    <location>
        <position position="360"/>
    </location>
</feature>
<feature type="helix" evidence="17">
    <location>
        <begin position="18"/>
        <end position="27"/>
    </location>
</feature>
<feature type="helix" evidence="17">
    <location>
        <begin position="33"/>
        <end position="40"/>
    </location>
</feature>
<feature type="turn" evidence="17">
    <location>
        <begin position="47"/>
        <end position="49"/>
    </location>
</feature>
<feature type="helix" evidence="17">
    <location>
        <begin position="50"/>
        <end position="57"/>
    </location>
</feature>
<feature type="helix" evidence="17">
    <location>
        <begin position="67"/>
        <end position="70"/>
    </location>
</feature>
<feature type="helix" evidence="17">
    <location>
        <begin position="79"/>
        <end position="93"/>
    </location>
</feature>
<feature type="helix" evidence="17">
    <location>
        <begin position="100"/>
        <end position="117"/>
    </location>
</feature>
<feature type="helix" evidence="17">
    <location>
        <begin position="128"/>
        <end position="138"/>
    </location>
</feature>
<feature type="helix" evidence="17">
    <location>
        <begin position="142"/>
        <end position="155"/>
    </location>
</feature>
<feature type="helix" evidence="17">
    <location>
        <begin position="159"/>
        <end position="161"/>
    </location>
</feature>
<feature type="turn" evidence="17">
    <location>
        <begin position="162"/>
        <end position="164"/>
    </location>
</feature>
<feature type="helix" evidence="17">
    <location>
        <begin position="166"/>
        <end position="178"/>
    </location>
</feature>
<feature type="helix" evidence="17">
    <location>
        <begin position="180"/>
        <end position="188"/>
    </location>
</feature>
<feature type="helix" evidence="17">
    <location>
        <begin position="193"/>
        <end position="203"/>
    </location>
</feature>
<feature type="turn" evidence="17">
    <location>
        <begin position="204"/>
        <end position="208"/>
    </location>
</feature>
<feature type="helix" evidence="17">
    <location>
        <begin position="211"/>
        <end position="224"/>
    </location>
</feature>
<feature type="helix" evidence="17">
    <location>
        <begin position="229"/>
        <end position="240"/>
    </location>
</feature>
<feature type="helix" evidence="17">
    <location>
        <begin position="242"/>
        <end position="247"/>
    </location>
</feature>
<feature type="helix" evidence="17">
    <location>
        <begin position="253"/>
        <end position="261"/>
    </location>
</feature>
<feature type="helix" evidence="17">
    <location>
        <begin position="264"/>
        <end position="266"/>
    </location>
</feature>
<feature type="helix" evidence="17">
    <location>
        <begin position="269"/>
        <end position="271"/>
    </location>
</feature>
<feature type="helix" evidence="17">
    <location>
        <begin position="272"/>
        <end position="284"/>
    </location>
</feature>
<feature type="helix" evidence="17">
    <location>
        <begin position="289"/>
        <end position="292"/>
    </location>
</feature>
<feature type="helix" evidence="17">
    <location>
        <begin position="295"/>
        <end position="297"/>
    </location>
</feature>
<feature type="strand" evidence="17">
    <location>
        <begin position="305"/>
        <end position="307"/>
    </location>
</feature>
<feature type="strand" evidence="17">
    <location>
        <begin position="312"/>
        <end position="314"/>
    </location>
</feature>
<feature type="strand" evidence="17">
    <location>
        <begin position="316"/>
        <end position="320"/>
    </location>
</feature>
<feature type="helix" evidence="17">
    <location>
        <begin position="322"/>
        <end position="331"/>
    </location>
</feature>
<feature type="strand" evidence="17">
    <location>
        <begin position="333"/>
        <end position="335"/>
    </location>
</feature>
<feature type="strand" evidence="17">
    <location>
        <begin position="338"/>
        <end position="342"/>
    </location>
</feature>
<feature type="helix" evidence="17">
    <location>
        <begin position="346"/>
        <end position="351"/>
    </location>
</feature>
<feature type="strand" evidence="17">
    <location>
        <begin position="352"/>
        <end position="354"/>
    </location>
</feature>
<feature type="helix" evidence="17">
    <location>
        <begin position="364"/>
        <end position="367"/>
    </location>
</feature>
<feature type="helix" evidence="17">
    <location>
        <begin position="369"/>
        <end position="389"/>
    </location>
</feature>
<feature type="strand" evidence="17">
    <location>
        <begin position="396"/>
        <end position="401"/>
    </location>
</feature>
<feature type="turn" evidence="17">
    <location>
        <begin position="406"/>
        <end position="410"/>
    </location>
</feature>
<feature type="helix" evidence="17">
    <location>
        <begin position="411"/>
        <end position="421"/>
    </location>
</feature>
<feature type="strand" evidence="17">
    <location>
        <begin position="425"/>
        <end position="430"/>
    </location>
</feature>
<feature type="helix" evidence="17">
    <location>
        <begin position="433"/>
        <end position="444"/>
    </location>
</feature>
<feature type="strand" evidence="17">
    <location>
        <begin position="450"/>
        <end position="454"/>
    </location>
</feature>
<feature type="strand" evidence="17">
    <location>
        <begin position="456"/>
        <end position="458"/>
    </location>
</feature>
<feature type="helix" evidence="19">
    <location>
        <begin position="545"/>
        <end position="547"/>
    </location>
</feature>
<feature type="strand" evidence="18">
    <location>
        <begin position="578"/>
        <end position="580"/>
    </location>
</feature>
<feature type="helix" evidence="18">
    <location>
        <begin position="581"/>
        <end position="585"/>
    </location>
</feature>
<feature type="strand" evidence="18">
    <location>
        <begin position="592"/>
        <end position="599"/>
    </location>
</feature>
<feature type="strand" evidence="18">
    <location>
        <begin position="601"/>
        <end position="603"/>
    </location>
</feature>
<feature type="strand" evidence="18">
    <location>
        <begin position="605"/>
        <end position="612"/>
    </location>
</feature>
<feature type="strand" evidence="18">
    <location>
        <begin position="614"/>
        <end position="622"/>
    </location>
</feature>
<feature type="strand" evidence="18">
    <location>
        <begin position="629"/>
        <end position="637"/>
    </location>
</feature>
<feature type="helix" evidence="18">
    <location>
        <begin position="638"/>
        <end position="640"/>
    </location>
</feature>
<feature type="strand" evidence="18">
    <location>
        <begin position="641"/>
        <end position="647"/>
    </location>
</feature>
<feature type="strand" evidence="18">
    <location>
        <begin position="650"/>
        <end position="662"/>
    </location>
</feature>
<feature type="strand" evidence="18">
    <location>
        <begin position="665"/>
        <end position="675"/>
    </location>
</feature>
<feature type="helix" evidence="18">
    <location>
        <begin position="679"/>
        <end position="694"/>
    </location>
</feature>
<accession>Q9NUY8</accession>
<accession>B9A6M5</accession>
<accession>Q8TCN8</accession>
<accession>Q8WUB7</accession>
<accession>Q96D90</accession>
<accession>Q9NV75</accession>
<organism>
    <name type="scientific">Homo sapiens</name>
    <name type="common">Human</name>
    <dbReference type="NCBI Taxonomy" id="9606"/>
    <lineage>
        <taxon>Eukaryota</taxon>
        <taxon>Metazoa</taxon>
        <taxon>Chordata</taxon>
        <taxon>Craniata</taxon>
        <taxon>Vertebrata</taxon>
        <taxon>Euteleostomi</taxon>
        <taxon>Mammalia</taxon>
        <taxon>Eutheria</taxon>
        <taxon>Euarchontoglires</taxon>
        <taxon>Primates</taxon>
        <taxon>Haplorrhini</taxon>
        <taxon>Catarrhini</taxon>
        <taxon>Hominidae</taxon>
        <taxon>Homo</taxon>
    </lineage>
</organism>
<reference key="1">
    <citation type="journal article" date="2009" name="Genes Cells">
        <title>Identification and characterization of a novel Tre-2/Bub2/Cdc16 (TBC) protein that possesses Rab3A-GAP activity.</title>
        <authorList>
            <person name="Ishibashi K."/>
            <person name="Kanno E."/>
            <person name="Itoh T."/>
            <person name="Fukuda M."/>
        </authorList>
    </citation>
    <scope>NUCLEOTIDE SEQUENCE [MRNA] (ISOFORM 2)</scope>
    <source>
        <tissue>Brain</tissue>
    </source>
</reference>
<reference key="2">
    <citation type="journal article" date="2004" name="Nat. Genet.">
        <title>Complete sequencing and characterization of 21,243 full-length human cDNAs.</title>
        <authorList>
            <person name="Ota T."/>
            <person name="Suzuki Y."/>
            <person name="Nishikawa T."/>
            <person name="Otsuki T."/>
            <person name="Sugiyama T."/>
            <person name="Irie R."/>
            <person name="Wakamatsu A."/>
            <person name="Hayashi K."/>
            <person name="Sato H."/>
            <person name="Nagai K."/>
            <person name="Kimura K."/>
            <person name="Makita H."/>
            <person name="Sekine M."/>
            <person name="Obayashi M."/>
            <person name="Nishi T."/>
            <person name="Shibahara T."/>
            <person name="Tanaka T."/>
            <person name="Ishii S."/>
            <person name="Yamamoto J."/>
            <person name="Saito K."/>
            <person name="Kawai Y."/>
            <person name="Isono Y."/>
            <person name="Nakamura Y."/>
            <person name="Nagahari K."/>
            <person name="Murakami K."/>
            <person name="Yasuda T."/>
            <person name="Iwayanagi T."/>
            <person name="Wagatsuma M."/>
            <person name="Shiratori A."/>
            <person name="Sudo H."/>
            <person name="Hosoiri T."/>
            <person name="Kaku Y."/>
            <person name="Kodaira H."/>
            <person name="Kondo H."/>
            <person name="Sugawara M."/>
            <person name="Takahashi M."/>
            <person name="Kanda K."/>
            <person name="Yokoi T."/>
            <person name="Furuya T."/>
            <person name="Kikkawa E."/>
            <person name="Omura Y."/>
            <person name="Abe K."/>
            <person name="Kamihara K."/>
            <person name="Katsuta N."/>
            <person name="Sato K."/>
            <person name="Tanikawa M."/>
            <person name="Yamazaki M."/>
            <person name="Ninomiya K."/>
            <person name="Ishibashi T."/>
            <person name="Yamashita H."/>
            <person name="Murakawa K."/>
            <person name="Fujimori K."/>
            <person name="Tanai H."/>
            <person name="Kimata M."/>
            <person name="Watanabe M."/>
            <person name="Hiraoka S."/>
            <person name="Chiba Y."/>
            <person name="Ishida S."/>
            <person name="Ono Y."/>
            <person name="Takiguchi S."/>
            <person name="Watanabe S."/>
            <person name="Yosida M."/>
            <person name="Hotuta T."/>
            <person name="Kusano J."/>
            <person name="Kanehori K."/>
            <person name="Takahashi-Fujii A."/>
            <person name="Hara H."/>
            <person name="Tanase T.-O."/>
            <person name="Nomura Y."/>
            <person name="Togiya S."/>
            <person name="Komai F."/>
            <person name="Hara R."/>
            <person name="Takeuchi K."/>
            <person name="Arita M."/>
            <person name="Imose N."/>
            <person name="Musashino K."/>
            <person name="Yuuki H."/>
            <person name="Oshima A."/>
            <person name="Sasaki N."/>
            <person name="Aotsuka S."/>
            <person name="Yoshikawa Y."/>
            <person name="Matsunawa H."/>
            <person name="Ichihara T."/>
            <person name="Shiohata N."/>
            <person name="Sano S."/>
            <person name="Moriya S."/>
            <person name="Momiyama H."/>
            <person name="Satoh N."/>
            <person name="Takami S."/>
            <person name="Terashima Y."/>
            <person name="Suzuki O."/>
            <person name="Nakagawa S."/>
            <person name="Senoh A."/>
            <person name="Mizoguchi H."/>
            <person name="Goto Y."/>
            <person name="Shimizu F."/>
            <person name="Wakebe H."/>
            <person name="Hishigaki H."/>
            <person name="Watanabe T."/>
            <person name="Sugiyama A."/>
            <person name="Takemoto M."/>
            <person name="Kawakami B."/>
            <person name="Yamazaki M."/>
            <person name="Watanabe K."/>
            <person name="Kumagai A."/>
            <person name="Itakura S."/>
            <person name="Fukuzumi Y."/>
            <person name="Fujimori Y."/>
            <person name="Komiyama M."/>
            <person name="Tashiro H."/>
            <person name="Tanigami A."/>
            <person name="Fujiwara T."/>
            <person name="Ono T."/>
            <person name="Yamada K."/>
            <person name="Fujii Y."/>
            <person name="Ozaki K."/>
            <person name="Hirao M."/>
            <person name="Ohmori Y."/>
            <person name="Kawabata A."/>
            <person name="Hikiji T."/>
            <person name="Kobatake N."/>
            <person name="Inagaki H."/>
            <person name="Ikema Y."/>
            <person name="Okamoto S."/>
            <person name="Okitani R."/>
            <person name="Kawakami T."/>
            <person name="Noguchi S."/>
            <person name="Itoh T."/>
            <person name="Shigeta K."/>
            <person name="Senba T."/>
            <person name="Matsumura K."/>
            <person name="Nakajima Y."/>
            <person name="Mizuno T."/>
            <person name="Morinaga M."/>
            <person name="Sasaki M."/>
            <person name="Togashi T."/>
            <person name="Oyama M."/>
            <person name="Hata H."/>
            <person name="Watanabe M."/>
            <person name="Komatsu T."/>
            <person name="Mizushima-Sugano J."/>
            <person name="Satoh T."/>
            <person name="Shirai Y."/>
            <person name="Takahashi Y."/>
            <person name="Nakagawa K."/>
            <person name="Okumura K."/>
            <person name="Nagase T."/>
            <person name="Nomura N."/>
            <person name="Kikuchi H."/>
            <person name="Masuho Y."/>
            <person name="Yamashita R."/>
            <person name="Nakai K."/>
            <person name="Yada T."/>
            <person name="Nakamura Y."/>
            <person name="Ohara O."/>
            <person name="Isogai T."/>
            <person name="Sugano S."/>
        </authorList>
    </citation>
    <scope>NUCLEOTIDE SEQUENCE [LARGE SCALE MRNA] (ISOFORM 2)</scope>
    <source>
        <tissue>Placenta</tissue>
    </source>
</reference>
<reference key="3">
    <citation type="journal article" date="2006" name="Nature">
        <title>The DNA sequence, annotation and analysis of human chromosome 3.</title>
        <authorList>
            <person name="Muzny D.M."/>
            <person name="Scherer S.E."/>
            <person name="Kaul R."/>
            <person name="Wang J."/>
            <person name="Yu J."/>
            <person name="Sudbrak R."/>
            <person name="Buhay C.J."/>
            <person name="Chen R."/>
            <person name="Cree A."/>
            <person name="Ding Y."/>
            <person name="Dugan-Rocha S."/>
            <person name="Gill R."/>
            <person name="Gunaratne P."/>
            <person name="Harris R.A."/>
            <person name="Hawes A.C."/>
            <person name="Hernandez J."/>
            <person name="Hodgson A.V."/>
            <person name="Hume J."/>
            <person name="Jackson A."/>
            <person name="Khan Z.M."/>
            <person name="Kovar-Smith C."/>
            <person name="Lewis L.R."/>
            <person name="Lozado R.J."/>
            <person name="Metzker M.L."/>
            <person name="Milosavljevic A."/>
            <person name="Miner G.R."/>
            <person name="Morgan M.B."/>
            <person name="Nazareth L.V."/>
            <person name="Scott G."/>
            <person name="Sodergren E."/>
            <person name="Song X.-Z."/>
            <person name="Steffen D."/>
            <person name="Wei S."/>
            <person name="Wheeler D.A."/>
            <person name="Wright M.W."/>
            <person name="Worley K.C."/>
            <person name="Yuan Y."/>
            <person name="Zhang Z."/>
            <person name="Adams C.Q."/>
            <person name="Ansari-Lari M.A."/>
            <person name="Ayele M."/>
            <person name="Brown M.J."/>
            <person name="Chen G."/>
            <person name="Chen Z."/>
            <person name="Clendenning J."/>
            <person name="Clerc-Blankenburg K.P."/>
            <person name="Chen R."/>
            <person name="Chen Z."/>
            <person name="Davis C."/>
            <person name="Delgado O."/>
            <person name="Dinh H.H."/>
            <person name="Dong W."/>
            <person name="Draper H."/>
            <person name="Ernst S."/>
            <person name="Fu G."/>
            <person name="Gonzalez-Garay M.L."/>
            <person name="Garcia D.K."/>
            <person name="Gillett W."/>
            <person name="Gu J."/>
            <person name="Hao B."/>
            <person name="Haugen E."/>
            <person name="Havlak P."/>
            <person name="He X."/>
            <person name="Hennig S."/>
            <person name="Hu S."/>
            <person name="Huang W."/>
            <person name="Jackson L.R."/>
            <person name="Jacob L.S."/>
            <person name="Kelly S.H."/>
            <person name="Kube M."/>
            <person name="Levy R."/>
            <person name="Li Z."/>
            <person name="Liu B."/>
            <person name="Liu J."/>
            <person name="Liu W."/>
            <person name="Lu J."/>
            <person name="Maheshwari M."/>
            <person name="Nguyen B.-V."/>
            <person name="Okwuonu G.O."/>
            <person name="Palmeiri A."/>
            <person name="Pasternak S."/>
            <person name="Perez L.M."/>
            <person name="Phelps K.A."/>
            <person name="Plopper F.J."/>
            <person name="Qiang B."/>
            <person name="Raymond C."/>
            <person name="Rodriguez R."/>
            <person name="Saenphimmachak C."/>
            <person name="Santibanez J."/>
            <person name="Shen H."/>
            <person name="Shen Y."/>
            <person name="Subramanian S."/>
            <person name="Tabor P.E."/>
            <person name="Verduzco D."/>
            <person name="Waldron L."/>
            <person name="Wang J."/>
            <person name="Wang J."/>
            <person name="Wang Q."/>
            <person name="Williams G.A."/>
            <person name="Wong G.K.-S."/>
            <person name="Yao Z."/>
            <person name="Zhang J."/>
            <person name="Zhang X."/>
            <person name="Zhao G."/>
            <person name="Zhou J."/>
            <person name="Zhou Y."/>
            <person name="Nelson D."/>
            <person name="Lehrach H."/>
            <person name="Reinhardt R."/>
            <person name="Naylor S.L."/>
            <person name="Yang H."/>
            <person name="Olson M."/>
            <person name="Weinstock G."/>
            <person name="Gibbs R.A."/>
        </authorList>
    </citation>
    <scope>NUCLEOTIDE SEQUENCE [LARGE SCALE GENOMIC DNA]</scope>
</reference>
<reference key="4">
    <citation type="journal article" date="2004" name="Genome Res.">
        <title>The status, quality, and expansion of the NIH full-length cDNA project: the Mammalian Gene Collection (MGC).</title>
        <authorList>
            <consortium name="The MGC Project Team"/>
        </authorList>
    </citation>
    <scope>NUCLEOTIDE SEQUENCE [LARGE SCALE MRNA] OF 3-684 (ISOFORM 1)</scope>
    <scope>NUCLEOTIDE SEQUENCE [LARGE SCALE MRNA] OF 353-684 (ISOFORM 2)</scope>
    <source>
        <tissue>Colon</tissue>
        <tissue>Placenta</tissue>
    </source>
</reference>
<reference key="5">
    <citation type="journal article" date="2007" name="BMC Genomics">
        <title>The full-ORF clone resource of the German cDNA consortium.</title>
        <authorList>
            <person name="Bechtel S."/>
            <person name="Rosenfelder H."/>
            <person name="Duda A."/>
            <person name="Schmidt C.P."/>
            <person name="Ernst U."/>
            <person name="Wellenreuther R."/>
            <person name="Mehrle A."/>
            <person name="Schuster C."/>
            <person name="Bahr A."/>
            <person name="Bloecker H."/>
            <person name="Heubner D."/>
            <person name="Hoerlein A."/>
            <person name="Michel G."/>
            <person name="Wedler H."/>
            <person name="Koehrer K."/>
            <person name="Ottenwaelder B."/>
            <person name="Poustka A."/>
            <person name="Wiemann S."/>
            <person name="Schupp I."/>
        </authorList>
    </citation>
    <scope>NUCLEOTIDE SEQUENCE [LARGE SCALE MRNA] OF 307-684 (ISOFORM 1)</scope>
    <source>
        <tissue>Lymph node</tissue>
    </source>
</reference>
<reference key="6">
    <citation type="submission" date="2004-09" db="EMBL/GenBank/DDBJ databases">
        <title>Homo sapiens gene 1 transactivated by nonstructural protein 4A of hepatitis C virus (NS4ATP1) mRNA.</title>
        <authorList>
            <person name="Liu Y."/>
            <person name="Cheng J."/>
            <person name="Ji D."/>
            <person name="Yan F."/>
            <person name="Gao X."/>
            <person name="Zhang L."/>
            <person name="Chen J."/>
        </authorList>
    </citation>
    <scope>NUCLEOTIDE SEQUENCE [MRNA] OF 365-684 (ISOFORM 1)</scope>
</reference>
<reference key="7">
    <citation type="journal article" date="2006" name="Nat. Biotechnol.">
        <title>A probability-based approach for high-throughput protein phosphorylation analysis and site localization.</title>
        <authorList>
            <person name="Beausoleil S.A."/>
            <person name="Villen J."/>
            <person name="Gerber S.A."/>
            <person name="Rush J."/>
            <person name="Gygi S.P."/>
        </authorList>
    </citation>
    <scope>PHOSPHORYLATION [LARGE SCALE ANALYSIS] AT SER-474 AND THR-514</scope>
    <scope>IDENTIFICATION BY MASS SPECTROMETRY [LARGE SCALE ANALYSIS]</scope>
    <source>
        <tissue>Cervix carcinoma</tissue>
    </source>
</reference>
<reference key="8">
    <citation type="journal article" date="2008" name="Proc. Natl. Acad. Sci. U.S.A.">
        <title>A quantitative atlas of mitotic phosphorylation.</title>
        <authorList>
            <person name="Dephoure N."/>
            <person name="Zhou C."/>
            <person name="Villen J."/>
            <person name="Beausoleil S.A."/>
            <person name="Bakalarski C.E."/>
            <person name="Elledge S.J."/>
            <person name="Gygi S.P."/>
        </authorList>
    </citation>
    <scope>PHOSPHORYLATION [LARGE SCALE ANALYSIS] AT SER-507 AND THR-514</scope>
    <scope>IDENTIFICATION BY MASS SPECTROMETRY [LARGE SCALE ANALYSIS]</scope>
    <source>
        <tissue>Cervix carcinoma</tissue>
    </source>
</reference>
<reference key="9">
    <citation type="journal article" date="2009" name="Anal. Chem.">
        <title>Lys-N and trypsin cover complementary parts of the phosphoproteome in a refined SCX-based approach.</title>
        <authorList>
            <person name="Gauci S."/>
            <person name="Helbig A.O."/>
            <person name="Slijper M."/>
            <person name="Krijgsveld J."/>
            <person name="Heck A.J."/>
            <person name="Mohammed S."/>
        </authorList>
    </citation>
    <scope>IDENTIFICATION BY MASS SPECTROMETRY [LARGE SCALE ANALYSIS]</scope>
</reference>
<reference key="10">
    <citation type="journal article" date="2010" name="Sci. Signal.">
        <title>Quantitative phosphoproteomics reveals widespread full phosphorylation site occupancy during mitosis.</title>
        <authorList>
            <person name="Olsen J.V."/>
            <person name="Vermeulen M."/>
            <person name="Santamaria A."/>
            <person name="Kumar C."/>
            <person name="Miller M.L."/>
            <person name="Jensen L.J."/>
            <person name="Gnad F."/>
            <person name="Cox J."/>
            <person name="Jensen T.S."/>
            <person name="Nigg E.A."/>
            <person name="Brunak S."/>
            <person name="Mann M."/>
        </authorList>
    </citation>
    <scope>IDENTIFICATION BY MASS SPECTROMETRY [LARGE SCALE ANALYSIS]</scope>
    <source>
        <tissue>Cervix carcinoma</tissue>
    </source>
</reference>
<reference key="11">
    <citation type="journal article" date="2011" name="BMC Syst. Biol.">
        <title>Initial characterization of the human central proteome.</title>
        <authorList>
            <person name="Burkard T.R."/>
            <person name="Planyavsky M."/>
            <person name="Kaupe I."/>
            <person name="Breitwieser F.P."/>
            <person name="Buerckstuemmer T."/>
            <person name="Bennett K.L."/>
            <person name="Superti-Furga G."/>
            <person name="Colinge J."/>
        </authorList>
    </citation>
    <scope>IDENTIFICATION BY MASS SPECTROMETRY [LARGE SCALE ANALYSIS]</scope>
</reference>
<reference key="12">
    <citation type="journal article" date="2013" name="J. Proteome Res.">
        <title>Toward a comprehensive characterization of a human cancer cell phosphoproteome.</title>
        <authorList>
            <person name="Zhou H."/>
            <person name="Di Palma S."/>
            <person name="Preisinger C."/>
            <person name="Peng M."/>
            <person name="Polat A.N."/>
            <person name="Heck A.J."/>
            <person name="Mohammed S."/>
        </authorList>
    </citation>
    <scope>PHOSPHORYLATION [LARGE SCALE ANALYSIS] AT SER-300; SER-474; SER-507 AND SER-520</scope>
    <scope>IDENTIFICATION BY MASS SPECTROMETRY [LARGE SCALE ANALYSIS]</scope>
    <source>
        <tissue>Erythroleukemia</tissue>
    </source>
</reference>
<reference key="13">
    <citation type="journal article" date="2014" name="J. Proteomics">
        <title>An enzyme assisted RP-RPLC approach for in-depth analysis of human liver phosphoproteome.</title>
        <authorList>
            <person name="Bian Y."/>
            <person name="Song C."/>
            <person name="Cheng K."/>
            <person name="Dong M."/>
            <person name="Wang F."/>
            <person name="Huang J."/>
            <person name="Sun D."/>
            <person name="Wang L."/>
            <person name="Ye M."/>
            <person name="Zou H."/>
        </authorList>
    </citation>
    <scope>PHOSPHORYLATION [LARGE SCALE ANALYSIS] AT SER-571</scope>
    <scope>IDENTIFICATION BY MASS SPECTROMETRY [LARGE SCALE ANALYSIS]</scope>
    <source>
        <tissue>Liver</tissue>
    </source>
</reference>
<reference key="14">
    <citation type="journal article" date="2017" name="Am. J. Hum. Genet.">
        <title>Homozygous truncating variants in TBC1D23 cause pontocerebellar hypoplasia and alter cortical development.</title>
        <authorList>
            <person name="Ivanova E.L."/>
            <person name="Mau-Them F.T."/>
            <person name="Riazuddin S."/>
            <person name="Kahrizi K."/>
            <person name="Laugel V."/>
            <person name="Schaefer E."/>
            <person name="de Saint Martin A."/>
            <person name="Runge K."/>
            <person name="Iqbal Z."/>
            <person name="Spitz M.A."/>
            <person name="Laura M."/>
            <person name="Drouot N."/>
            <person name="Gerard B."/>
            <person name="Deleuze J.F."/>
            <person name="de Brouwer A.P.M."/>
            <person name="Razzaq A."/>
            <person name="Dollfus H."/>
            <person name="Assir M.Z."/>
            <person name="Nitchke P."/>
            <person name="Hinckelmann M.V."/>
            <person name="Ropers H."/>
            <person name="Riazuddin S."/>
            <person name="Najmabadi H."/>
            <person name="van Bokhoven H."/>
            <person name="Chelly J."/>
        </authorList>
    </citation>
    <scope>INVOLVEMENT IN PCH11</scope>
    <scope>FUNCTION</scope>
</reference>
<reference key="15">
    <citation type="journal article" date="2017" name="Am. J. Hum. Genet.">
        <title>Homozygous mutations in TBC1D23 lead to a non-degenerative form of pontocerebellar hypoplasia.</title>
        <authorList>
            <person name="Marin-Valencia I."/>
            <person name="Gerondopoulos A."/>
            <person name="Zaki M.S."/>
            <person name="Ben-Omran T."/>
            <person name="Almureikhi M."/>
            <person name="Demir E."/>
            <person name="Guemez-Gamboa A."/>
            <person name="Gregor A."/>
            <person name="Issa M.Y."/>
            <person name="Appelhof B."/>
            <person name="Roosing S."/>
            <person name="Musaev D."/>
            <person name="Rosti B."/>
            <person name="Wirth S."/>
            <person name="Stanley V."/>
            <person name="Baas F."/>
            <person name="Barr F.A."/>
            <person name="Gleeson J.G."/>
        </authorList>
    </citation>
    <scope>INVOLVEMENT IN PCH11</scope>
    <scope>VARIANT PCH11 GLN-518</scope>
    <scope>SUBCELLULAR LOCATION</scope>
    <scope>TISSUE SPECIFICITY</scope>
</reference>
<reference key="16">
    <citation type="journal article" date="2017" name="Nat. Cell Biol.">
        <title>TBC1D23 is a bridging factor for endosomal vesicle capture by golgins at the trans-Golgi.</title>
        <authorList>
            <person name="Shin J.J.H."/>
            <person name="Gillingham A.K."/>
            <person name="Begum F."/>
            <person name="Chadwick J."/>
            <person name="Munro S."/>
        </authorList>
    </citation>
    <scope>FUNCTION</scope>
    <scope>INTERACTION WITH C17ORF75; FAM91A1; FKBP15; GOLGA1; GOLGA4; WASHC1; WASHC2A AND WDR11</scope>
    <scope>SUBCELLULAR LOCATION</scope>
</reference>
<reference key="17">
    <citation type="journal article" date="2018" name="Nat. Commun.">
        <title>The WDR11 complex facilitates the tethering of AP-1-derived vesicles.</title>
        <authorList>
            <person name="Navarro Negredo P."/>
            <person name="Edgar J.R."/>
            <person name="Manna P.T."/>
            <person name="Antrobus R."/>
            <person name="Robinson M.S."/>
        </authorList>
    </citation>
    <scope>FUNCTION</scope>
    <scope>SUBCELLULAR LOCATION</scope>
    <scope>INTERACTION WITH THE COMPLEX WDR11</scope>
</reference>
<gene>
    <name type="primary">TBC1D23</name>
    <name type="synonym">NS4ATP1</name>
</gene>
<sequence>MAEGEDVPPLPTSSGDGWEKDLEEALEAGGCDLETLRNIIQGRPLPADLRAKVWKIALNVAGKGDSLASWDGILDLPEQNTIHKDCLQFIDQLSVPEEKAAELLLDIESVITFYCKSRNIKYSTSLSWIHLLKPLVHLQLPRSDLYNCFYAIMNKYIPRDCSQKGRPFHLFRLLIQYHEPELCSYLDTKKITPDSYALNWLGSLFACYCSTEVTQAIWDGYLQQADPFFIYFLMLIILVNAKEVILTQESDSKEEVIKFLENTPSSLNIEDIEDLFSLAQYYCSKTPASFRKDNHHLFGSTLLGIKDDDADLSQALCLAISVSEILQANQLQGEGVRFFVVDCRPAEQYNAGHLSTAFHLDSDLMLQNPSEFAQSVKSLLEAQKQSIESGSIAGGEHLCFMGSGREEEDMYMNMVLAHFLQKNKEYVSIASGGFMALQQHLADINVDGPENGYGHWIASTSGSRSSINSVDGESPNGSSDRGMKSLVNKMTVALKTKSVNVREKVISFIENTSTPVDRMSFNLPWPDRSCTERHVSSSDRVGKPYRGVKPVFSIGDEEEYDTDEIDSSSMSDDDRKEVVNIQTWINKPDVKHHFPCKEVKESGHMFPSHLLVTATHMYCLREIVSRKGLAYIQSRQALNSVVKITSKKKHPELITFKYGNSSASGIEILAIERYLIPNAGDATKAIKQQIMKVLDALES</sequence>